<sequence>MSVNVYDVAYDLEKALRHSEEYSTLKNLYDEVNADESSKRMFENFRDIQVNLQQKQMTGQEITQEEVEQAQKTVALVQQHDKISQLMEAEQRVSVLIGELNKVIMKPLEELYGNPEEN</sequence>
<accession>A8FBJ5</accession>
<organism>
    <name type="scientific">Bacillus pumilus (strain SAFR-032)</name>
    <dbReference type="NCBI Taxonomy" id="315750"/>
    <lineage>
        <taxon>Bacteria</taxon>
        <taxon>Bacillati</taxon>
        <taxon>Bacillota</taxon>
        <taxon>Bacilli</taxon>
        <taxon>Bacillales</taxon>
        <taxon>Bacillaceae</taxon>
        <taxon>Bacillus</taxon>
    </lineage>
</organism>
<evidence type="ECO:0000255" key="1">
    <source>
        <dbReference type="HAMAP-Rule" id="MF_01526"/>
    </source>
</evidence>
<protein>
    <recommendedName>
        <fullName evidence="1">UPF0342 protein BPUM_0928</fullName>
    </recommendedName>
</protein>
<comment type="similarity">
    <text evidence="1">Belongs to the UPF0342 family.</text>
</comment>
<feature type="chain" id="PRO_1000068658" description="UPF0342 protein BPUM_0928">
    <location>
        <begin position="1"/>
        <end position="118"/>
    </location>
</feature>
<proteinExistence type="inferred from homology"/>
<name>Y928_BACP2</name>
<gene>
    <name type="ordered locus">BPUM_0928</name>
</gene>
<reference key="1">
    <citation type="journal article" date="2007" name="PLoS ONE">
        <title>Paradoxical DNA repair and peroxide resistance gene conservation in Bacillus pumilus SAFR-032.</title>
        <authorList>
            <person name="Gioia J."/>
            <person name="Yerrapragada S."/>
            <person name="Qin X."/>
            <person name="Jiang H."/>
            <person name="Igboeli O.C."/>
            <person name="Muzny D."/>
            <person name="Dugan-Rocha S."/>
            <person name="Ding Y."/>
            <person name="Hawes A."/>
            <person name="Liu W."/>
            <person name="Perez L."/>
            <person name="Kovar C."/>
            <person name="Dinh H."/>
            <person name="Lee S."/>
            <person name="Nazareth L."/>
            <person name="Blyth P."/>
            <person name="Holder M."/>
            <person name="Buhay C."/>
            <person name="Tirumalai M.R."/>
            <person name="Liu Y."/>
            <person name="Dasgupta I."/>
            <person name="Bokhetache L."/>
            <person name="Fujita M."/>
            <person name="Karouia F."/>
            <person name="Eswara Moorthy P."/>
            <person name="Siefert J."/>
            <person name="Uzman A."/>
            <person name="Buzumbo P."/>
            <person name="Verma A."/>
            <person name="Zwiya H."/>
            <person name="McWilliams B.D."/>
            <person name="Olowu A."/>
            <person name="Clinkenbeard K.D."/>
            <person name="Newcombe D."/>
            <person name="Golebiewski L."/>
            <person name="Petrosino J.F."/>
            <person name="Nicholson W.L."/>
            <person name="Fox G.E."/>
            <person name="Venkateswaran K."/>
            <person name="Highlander S.K."/>
            <person name="Weinstock G.M."/>
        </authorList>
    </citation>
    <scope>NUCLEOTIDE SEQUENCE [LARGE SCALE GENOMIC DNA]</scope>
    <source>
        <strain>SAFR-032</strain>
    </source>
</reference>
<dbReference type="EMBL" id="CP000813">
    <property type="protein sequence ID" value="ABV61612.1"/>
    <property type="molecule type" value="Genomic_DNA"/>
</dbReference>
<dbReference type="RefSeq" id="WP_012009440.1">
    <property type="nucleotide sequence ID" value="NZ_VEIS01000007.1"/>
</dbReference>
<dbReference type="SMR" id="A8FBJ5"/>
<dbReference type="STRING" id="315750.BPUM_0928"/>
<dbReference type="GeneID" id="5620193"/>
<dbReference type="KEGG" id="bpu:BPUM_0928"/>
<dbReference type="eggNOG" id="COG3679">
    <property type="taxonomic scope" value="Bacteria"/>
</dbReference>
<dbReference type="HOGENOM" id="CLU_140243_3_0_9"/>
<dbReference type="OrthoDB" id="9811402at2"/>
<dbReference type="Proteomes" id="UP000001355">
    <property type="component" value="Chromosome"/>
</dbReference>
<dbReference type="Gene3D" id="1.20.1500.10">
    <property type="entry name" value="YheA/YmcA-like"/>
    <property type="match status" value="1"/>
</dbReference>
<dbReference type="HAMAP" id="MF_01526">
    <property type="entry name" value="UPF0342"/>
    <property type="match status" value="1"/>
</dbReference>
<dbReference type="InterPro" id="IPR010368">
    <property type="entry name" value="Com_YlbF"/>
</dbReference>
<dbReference type="InterPro" id="IPR023378">
    <property type="entry name" value="YheA/YmcA-like_dom_sf"/>
</dbReference>
<dbReference type="Pfam" id="PF06133">
    <property type="entry name" value="Com_YlbF"/>
    <property type="match status" value="1"/>
</dbReference>
<dbReference type="SUPFAM" id="SSF158622">
    <property type="entry name" value="YheA/YmcA-like"/>
    <property type="match status" value="1"/>
</dbReference>